<comment type="function">
    <text evidence="1">NDH-1 shuttles electrons from an unknown electron donor, via FMN and iron-sulfur (Fe-S) centers, to quinones in the respiratory and/or the photosynthetic chain. The immediate electron acceptor for the enzyme in this species is believed to be plastoquinone. Couples the redox reaction to proton translocation, and thus conserves the redox energy in a proton gradient. Cyanobacterial NDH-1 also plays a role in inorganic carbon-concentration.</text>
</comment>
<comment type="catalytic activity">
    <reaction evidence="1">
        <text>a plastoquinone + NADH + (n+1) H(+)(in) = a plastoquinol + NAD(+) + n H(+)(out)</text>
        <dbReference type="Rhea" id="RHEA:42608"/>
        <dbReference type="Rhea" id="RHEA-COMP:9561"/>
        <dbReference type="Rhea" id="RHEA-COMP:9562"/>
        <dbReference type="ChEBI" id="CHEBI:15378"/>
        <dbReference type="ChEBI" id="CHEBI:17757"/>
        <dbReference type="ChEBI" id="CHEBI:57540"/>
        <dbReference type="ChEBI" id="CHEBI:57945"/>
        <dbReference type="ChEBI" id="CHEBI:62192"/>
    </reaction>
</comment>
<comment type="catalytic activity">
    <reaction evidence="1">
        <text>a plastoquinone + NADPH + (n+1) H(+)(in) = a plastoquinol + NADP(+) + n H(+)(out)</text>
        <dbReference type="Rhea" id="RHEA:42612"/>
        <dbReference type="Rhea" id="RHEA-COMP:9561"/>
        <dbReference type="Rhea" id="RHEA-COMP:9562"/>
        <dbReference type="ChEBI" id="CHEBI:15378"/>
        <dbReference type="ChEBI" id="CHEBI:17757"/>
        <dbReference type="ChEBI" id="CHEBI:57783"/>
        <dbReference type="ChEBI" id="CHEBI:58349"/>
        <dbReference type="ChEBI" id="CHEBI:62192"/>
    </reaction>
</comment>
<comment type="cofactor">
    <cofactor evidence="1">
        <name>[4Fe-4S] cluster</name>
        <dbReference type="ChEBI" id="CHEBI:49883"/>
    </cofactor>
    <text evidence="1">Binds 1 [4Fe-4S] cluster.</text>
</comment>
<comment type="subunit">
    <text>NDH-1 can be composed of about 15 different subunits; different subcomplexes with different compositions have been identified which probably have different functions.</text>
</comment>
<comment type="subcellular location">
    <subcellularLocation>
        <location evidence="3">Cellular thylakoid membrane</location>
        <topology evidence="3">Peripheral membrane protein</topology>
        <orientation evidence="3">Cytoplasmic side</orientation>
    </subcellularLocation>
</comment>
<comment type="similarity">
    <text evidence="1">Belongs to the complex I 20 kDa subunit family.</text>
</comment>
<protein>
    <recommendedName>
        <fullName evidence="1">NAD(P)H-quinone oxidoreductase subunit K 1</fullName>
        <ecNumber evidence="1">7.1.1.-</ecNumber>
    </recommendedName>
    <alternativeName>
        <fullName evidence="1">NAD(P)H dehydrogenase I subunit K 1</fullName>
    </alternativeName>
    <alternativeName>
        <fullName evidence="1">NDH-1 subunit K 1</fullName>
        <shortName evidence="1">NDH-K 1</shortName>
    </alternativeName>
</protein>
<gene>
    <name evidence="1" type="primary">ndhK1</name>
    <name type="synonym">psbG</name>
    <name type="ordered locus">slr1280</name>
</gene>
<evidence type="ECO:0000255" key="1">
    <source>
        <dbReference type="HAMAP-Rule" id="MF_01356"/>
    </source>
</evidence>
<evidence type="ECO:0000256" key="2">
    <source>
        <dbReference type="SAM" id="MobiDB-lite"/>
    </source>
</evidence>
<evidence type="ECO:0000305" key="3">
    <source>
    </source>
</evidence>
<proteinExistence type="evidence at protein level"/>
<organism>
    <name type="scientific">Synechocystis sp. (strain ATCC 27184 / PCC 6803 / Kazusa)</name>
    <dbReference type="NCBI Taxonomy" id="1111708"/>
    <lineage>
        <taxon>Bacteria</taxon>
        <taxon>Bacillati</taxon>
        <taxon>Cyanobacteriota</taxon>
        <taxon>Cyanophyceae</taxon>
        <taxon>Synechococcales</taxon>
        <taxon>Merismopediaceae</taxon>
        <taxon>Synechocystis</taxon>
    </lineage>
</organism>
<accession>P19050</accession>
<keyword id="KW-0004">4Fe-4S</keyword>
<keyword id="KW-0903">Direct protein sequencing</keyword>
<keyword id="KW-0408">Iron</keyword>
<keyword id="KW-0411">Iron-sulfur</keyword>
<keyword id="KW-0472">Membrane</keyword>
<keyword id="KW-0479">Metal-binding</keyword>
<keyword id="KW-0520">NAD</keyword>
<keyword id="KW-0521">NADP</keyword>
<keyword id="KW-0618">Plastoquinone</keyword>
<keyword id="KW-0874">Quinone</keyword>
<keyword id="KW-1185">Reference proteome</keyword>
<keyword id="KW-0793">Thylakoid</keyword>
<keyword id="KW-1278">Translocase</keyword>
<keyword id="KW-0813">Transport</keyword>
<dbReference type="EC" id="7.1.1.-" evidence="1"/>
<dbReference type="EMBL" id="X17439">
    <property type="protein sequence ID" value="CAA35485.1"/>
    <property type="molecule type" value="Genomic_DNA"/>
</dbReference>
<dbReference type="EMBL" id="BA000022">
    <property type="protein sequence ID" value="BAA18284.1"/>
    <property type="molecule type" value="Genomic_DNA"/>
</dbReference>
<dbReference type="PIR" id="S04437">
    <property type="entry name" value="S04437"/>
</dbReference>
<dbReference type="SMR" id="P19050"/>
<dbReference type="IntAct" id="P19050">
    <property type="interactions" value="7"/>
</dbReference>
<dbReference type="STRING" id="1148.gene:10499160"/>
<dbReference type="PaxDb" id="1148-1653370"/>
<dbReference type="EnsemblBacteria" id="BAA18284">
    <property type="protein sequence ID" value="BAA18284"/>
    <property type="gene ID" value="BAA18284"/>
</dbReference>
<dbReference type="KEGG" id="syn:slr1280"/>
<dbReference type="eggNOG" id="COG0377">
    <property type="taxonomic scope" value="Bacteria"/>
</dbReference>
<dbReference type="InParanoid" id="P19050"/>
<dbReference type="PhylomeDB" id="P19050"/>
<dbReference type="Proteomes" id="UP000001425">
    <property type="component" value="Chromosome"/>
</dbReference>
<dbReference type="GO" id="GO:0031676">
    <property type="term" value="C:plasma membrane-derived thylakoid membrane"/>
    <property type="evidence" value="ECO:0007669"/>
    <property type="project" value="UniProtKB-SubCell"/>
</dbReference>
<dbReference type="GO" id="GO:0045271">
    <property type="term" value="C:respiratory chain complex I"/>
    <property type="evidence" value="ECO:0000318"/>
    <property type="project" value="GO_Central"/>
</dbReference>
<dbReference type="GO" id="GO:0051539">
    <property type="term" value="F:4 iron, 4 sulfur cluster binding"/>
    <property type="evidence" value="ECO:0007669"/>
    <property type="project" value="UniProtKB-KW"/>
</dbReference>
<dbReference type="GO" id="GO:0005506">
    <property type="term" value="F:iron ion binding"/>
    <property type="evidence" value="ECO:0007669"/>
    <property type="project" value="UniProtKB-UniRule"/>
</dbReference>
<dbReference type="GO" id="GO:0008137">
    <property type="term" value="F:NADH dehydrogenase (ubiquinone) activity"/>
    <property type="evidence" value="ECO:0000318"/>
    <property type="project" value="GO_Central"/>
</dbReference>
<dbReference type="GO" id="GO:0048038">
    <property type="term" value="F:quinone binding"/>
    <property type="evidence" value="ECO:0007669"/>
    <property type="project" value="UniProtKB-KW"/>
</dbReference>
<dbReference type="GO" id="GO:0009060">
    <property type="term" value="P:aerobic respiration"/>
    <property type="evidence" value="ECO:0000318"/>
    <property type="project" value="GO_Central"/>
</dbReference>
<dbReference type="GO" id="GO:0015990">
    <property type="term" value="P:electron transport coupled proton transport"/>
    <property type="evidence" value="ECO:0000318"/>
    <property type="project" value="GO_Central"/>
</dbReference>
<dbReference type="GO" id="GO:0019684">
    <property type="term" value="P:photosynthesis, light reaction"/>
    <property type="evidence" value="ECO:0007669"/>
    <property type="project" value="UniProtKB-UniRule"/>
</dbReference>
<dbReference type="FunFam" id="3.40.50.12280:FF:000003">
    <property type="entry name" value="NAD(P)H-quinone oxidoreductase subunit K, chloroplastic"/>
    <property type="match status" value="1"/>
</dbReference>
<dbReference type="Gene3D" id="3.40.50.12280">
    <property type="match status" value="1"/>
</dbReference>
<dbReference type="HAMAP" id="MF_01356">
    <property type="entry name" value="NDH1_NuoB"/>
    <property type="match status" value="1"/>
</dbReference>
<dbReference type="InterPro" id="IPR006137">
    <property type="entry name" value="NADH_UbQ_OxRdtase-like_20kDa"/>
</dbReference>
<dbReference type="InterPro" id="IPR006138">
    <property type="entry name" value="NADH_UQ_OxRdtase_20Kd_su"/>
</dbReference>
<dbReference type="NCBIfam" id="TIGR01957">
    <property type="entry name" value="nuoB_fam"/>
    <property type="match status" value="1"/>
</dbReference>
<dbReference type="NCBIfam" id="NF005012">
    <property type="entry name" value="PRK06411.1"/>
    <property type="match status" value="1"/>
</dbReference>
<dbReference type="PANTHER" id="PTHR11995">
    <property type="entry name" value="NADH DEHYDROGENASE"/>
    <property type="match status" value="1"/>
</dbReference>
<dbReference type="PANTHER" id="PTHR11995:SF14">
    <property type="entry name" value="NADH DEHYDROGENASE [UBIQUINONE] IRON-SULFUR PROTEIN 7, MITOCHONDRIAL"/>
    <property type="match status" value="1"/>
</dbReference>
<dbReference type="Pfam" id="PF01058">
    <property type="entry name" value="Oxidored_q6"/>
    <property type="match status" value="1"/>
</dbReference>
<dbReference type="SUPFAM" id="SSF56770">
    <property type="entry name" value="HydA/Nqo6-like"/>
    <property type="match status" value="1"/>
</dbReference>
<dbReference type="PROSITE" id="PS01150">
    <property type="entry name" value="COMPLEX1_20K"/>
    <property type="match status" value="1"/>
</dbReference>
<reference key="1">
    <citation type="journal article" date="1989" name="Mol. Gen. Genet.">
        <title>Characterization of the ndhC-psbG-ORF157/159 operon of maize plastid DNA and of the cyanobacterium Synechocystis sp. PCC6803.</title>
        <authorList>
            <person name="Steinmueller K."/>
            <person name="Ley A.C."/>
            <person name="Steinmetz A.A."/>
            <person name="Sayre R.T."/>
            <person name="Bogorad L."/>
        </authorList>
    </citation>
    <scope>NUCLEOTIDE SEQUENCE [GENOMIC DNA]</scope>
</reference>
<reference key="2">
    <citation type="journal article" date="1996" name="DNA Res.">
        <title>Sequence analysis of the genome of the unicellular cyanobacterium Synechocystis sp. strain PCC6803. II. Sequence determination of the entire genome and assignment of potential protein-coding regions.</title>
        <authorList>
            <person name="Kaneko T."/>
            <person name="Sato S."/>
            <person name="Kotani H."/>
            <person name="Tanaka A."/>
            <person name="Asamizu E."/>
            <person name="Nakamura Y."/>
            <person name="Miyajima N."/>
            <person name="Hirosawa M."/>
            <person name="Sugiura M."/>
            <person name="Sasamoto S."/>
            <person name="Kimura T."/>
            <person name="Hosouchi T."/>
            <person name="Matsuno A."/>
            <person name="Muraki A."/>
            <person name="Nakazaki N."/>
            <person name="Naruo K."/>
            <person name="Okumura S."/>
            <person name="Shimpo S."/>
            <person name="Takeuchi C."/>
            <person name="Wada T."/>
            <person name="Watanabe A."/>
            <person name="Yamada M."/>
            <person name="Yasuda M."/>
            <person name="Tabata S."/>
        </authorList>
    </citation>
    <scope>NUCLEOTIDE SEQUENCE [LARGE SCALE GENOMIC DNA]</scope>
    <source>
        <strain>ATCC 27184 / PCC 6803 / Kazusa</strain>
    </source>
</reference>
<reference key="3">
    <citation type="journal article" date="2004" name="J. Biol. Chem.">
        <title>Subunit composition of NDH-1 complexes of Synechocystis sp. PCC 6803: identification of two new ndh gene products with nuclear-encoded homologues in the chloroplast Ndh complex.</title>
        <authorList>
            <person name="Prommeenate P."/>
            <person name="Lennon A.M."/>
            <person name="Markert C."/>
            <person name="Hippler M."/>
            <person name="Nixon P.J."/>
        </authorList>
    </citation>
    <scope>PROTEIN SEQUENCE OF 2-10</scope>
    <scope>CHARACTERIZATION AS A MEMBER OF THE NAD(P)H-QUINONE OXIDOREDUCTASE COMPLEX</scope>
    <scope>SUBCOMPLEXES OF NDH-1</scope>
</reference>
<reference key="4">
    <citation type="journal article" date="1993" name="FEBS Lett.">
        <title>Immunopurification of a subcomplex of the NAD(P)H-plastoquinone-oxidoreductase from the cyanobacterium Synechocystis sp. PCC6803.</title>
        <authorList>
            <person name="Berger S."/>
            <person name="Ellersiek U."/>
            <person name="Kinzelt D."/>
            <person name="Steinmueller K."/>
        </authorList>
    </citation>
    <scope>PROTEIN SEQUENCE OF 2-8</scope>
    <scope>CHARACTERIZATION AS A MEMBER OF THE NAD(P)H-QUINONE OXIDOREDUCTASE COMPLEX</scope>
</reference>
<reference key="5">
    <citation type="journal article" date="2005" name="J. Biol. Chem.">
        <title>Identification of NdhL and Ssl1690 (NdhO) in NDH-1L and NDH-1M complexes of Synechocystis sp. PCC 6803.</title>
        <authorList>
            <person name="Battchikova N."/>
            <person name="Zhang P."/>
            <person name="Rudd S."/>
            <person name="Ogawa T."/>
            <person name="Aro E.-M."/>
        </authorList>
    </citation>
    <scope>PROTEIN SEQUENCE OF 90-119</scope>
    <scope>CHARACTERIZATION AS A MEMBER OF THE NAD(P)H-QUINONE OXIDOREDUCTASE COMPLEX</scope>
    <scope>SUBCOMPLEXES OF NDH-1</scope>
</reference>
<reference key="6">
    <citation type="journal article" date="2005" name="Proteomics">
        <title>Proteomic studies of the thylakoid membrane of Synechocystis sp. PCC 6803.</title>
        <authorList>
            <person name="Srivastava R."/>
            <person name="Pisareva T."/>
            <person name="Norling B."/>
        </authorList>
    </citation>
    <scope>SUBCELLULAR LOCATION IN THYLAKOID</scope>
</reference>
<sequence length="248" mass="27346">MSPNPANPTDLERVATAKILNPASRSQVTQDLSENVILTTVDDLYNWAKLSSLWPLLYGTACCFIEFAALIGSRFDFDRFGLVPRSSPRQADLIITAGTITMKMAPALVRLYEEMPEPKYVIAMGACTITGGMFSSDSTTAVRGVDKLIPVDVYIPGCPPRPEAIFDAIIKLRKKVANESIQERAITQQTHRYYSTSHQMKVVAPILDGKYLQQGTRSAPPRELQEAMGMPVPPALTTSQQKEQLNRG</sequence>
<name>NDHK1_SYNY3</name>
<feature type="propeptide" id="PRO_0000358500">
    <location>
        <begin position="1"/>
        <end position="2"/>
    </location>
</feature>
<feature type="chain" id="PRO_0000118760" description="NAD(P)H-quinone oxidoreductase subunit K 1">
    <location>
        <begin position="3"/>
        <end position="248"/>
    </location>
</feature>
<feature type="region of interest" description="Disordered" evidence="2">
    <location>
        <begin position="228"/>
        <end position="248"/>
    </location>
</feature>
<feature type="compositionally biased region" description="Polar residues" evidence="2">
    <location>
        <begin position="236"/>
        <end position="248"/>
    </location>
</feature>
<feature type="binding site" evidence="1">
    <location>
        <position position="62"/>
    </location>
    <ligand>
        <name>[4Fe-4S] cluster</name>
        <dbReference type="ChEBI" id="CHEBI:49883"/>
    </ligand>
</feature>
<feature type="binding site" evidence="1">
    <location>
        <position position="63"/>
    </location>
    <ligand>
        <name>[4Fe-4S] cluster</name>
        <dbReference type="ChEBI" id="CHEBI:49883"/>
    </ligand>
</feature>
<feature type="binding site" evidence="1">
    <location>
        <position position="127"/>
    </location>
    <ligand>
        <name>[4Fe-4S] cluster</name>
        <dbReference type="ChEBI" id="CHEBI:49883"/>
    </ligand>
</feature>
<feature type="binding site" evidence="1">
    <location>
        <position position="158"/>
    </location>
    <ligand>
        <name>[4Fe-4S] cluster</name>
        <dbReference type="ChEBI" id="CHEBI:49883"/>
    </ligand>
</feature>